<accession>B6J5D9</accession>
<keyword id="KW-0687">Ribonucleoprotein</keyword>
<keyword id="KW-0689">Ribosomal protein</keyword>
<keyword id="KW-0694">RNA-binding</keyword>
<keyword id="KW-0699">rRNA-binding</keyword>
<keyword id="KW-0820">tRNA-binding</keyword>
<protein>
    <recommendedName>
        <fullName evidence="1">Large ribosomal subunit protein uL16</fullName>
    </recommendedName>
    <alternativeName>
        <fullName evidence="3">50S ribosomal protein L16</fullName>
    </alternativeName>
</protein>
<sequence length="137" mass="15526">MLQPSNRKYRKDFKGRNRGVASRGNRVSFGEFGLKATECARITARQLEAARRTIARHIKRGGKITIRIFPDKPITKKPLEVRQGKGKGSVEYWVALVQPGRMIFEIEGVDEALAREAFNRAAAKLPLKCLFVKRTVM</sequence>
<organism>
    <name type="scientific">Coxiella burnetii (strain CbuK_Q154)</name>
    <name type="common">Coxiella burnetii (strain Q154)</name>
    <dbReference type="NCBI Taxonomy" id="434924"/>
    <lineage>
        <taxon>Bacteria</taxon>
        <taxon>Pseudomonadati</taxon>
        <taxon>Pseudomonadota</taxon>
        <taxon>Gammaproteobacteria</taxon>
        <taxon>Legionellales</taxon>
        <taxon>Coxiellaceae</taxon>
        <taxon>Coxiella</taxon>
    </lineage>
</organism>
<proteinExistence type="inferred from homology"/>
<gene>
    <name evidence="1" type="primary">rplP</name>
    <name type="ordered locus">CbuK_0440</name>
</gene>
<comment type="function">
    <text evidence="1">Binds 23S rRNA and is also seen to make contacts with the A and possibly P site tRNAs.</text>
</comment>
<comment type="subunit">
    <text evidence="1">Part of the 50S ribosomal subunit.</text>
</comment>
<comment type="similarity">
    <text evidence="1">Belongs to the universal ribosomal protein uL16 family.</text>
</comment>
<dbReference type="EMBL" id="CP001020">
    <property type="protein sequence ID" value="ACJ19723.1"/>
    <property type="molecule type" value="Genomic_DNA"/>
</dbReference>
<dbReference type="RefSeq" id="WP_005771532.1">
    <property type="nucleotide sequence ID" value="NC_011528.1"/>
</dbReference>
<dbReference type="SMR" id="B6J5D9"/>
<dbReference type="KEGG" id="cbc:CbuK_0440"/>
<dbReference type="HOGENOM" id="CLU_078858_2_1_6"/>
<dbReference type="GO" id="GO:0022625">
    <property type="term" value="C:cytosolic large ribosomal subunit"/>
    <property type="evidence" value="ECO:0007669"/>
    <property type="project" value="TreeGrafter"/>
</dbReference>
<dbReference type="GO" id="GO:0019843">
    <property type="term" value="F:rRNA binding"/>
    <property type="evidence" value="ECO:0007669"/>
    <property type="project" value="UniProtKB-UniRule"/>
</dbReference>
<dbReference type="GO" id="GO:0003735">
    <property type="term" value="F:structural constituent of ribosome"/>
    <property type="evidence" value="ECO:0007669"/>
    <property type="project" value="InterPro"/>
</dbReference>
<dbReference type="GO" id="GO:0000049">
    <property type="term" value="F:tRNA binding"/>
    <property type="evidence" value="ECO:0007669"/>
    <property type="project" value="UniProtKB-KW"/>
</dbReference>
<dbReference type="GO" id="GO:0006412">
    <property type="term" value="P:translation"/>
    <property type="evidence" value="ECO:0007669"/>
    <property type="project" value="UniProtKB-UniRule"/>
</dbReference>
<dbReference type="CDD" id="cd01433">
    <property type="entry name" value="Ribosomal_L16_L10e"/>
    <property type="match status" value="1"/>
</dbReference>
<dbReference type="FunFam" id="3.90.1170.10:FF:000001">
    <property type="entry name" value="50S ribosomal protein L16"/>
    <property type="match status" value="1"/>
</dbReference>
<dbReference type="Gene3D" id="3.90.1170.10">
    <property type="entry name" value="Ribosomal protein L10e/L16"/>
    <property type="match status" value="1"/>
</dbReference>
<dbReference type="HAMAP" id="MF_01342">
    <property type="entry name" value="Ribosomal_uL16"/>
    <property type="match status" value="1"/>
</dbReference>
<dbReference type="InterPro" id="IPR047873">
    <property type="entry name" value="Ribosomal_uL16"/>
</dbReference>
<dbReference type="InterPro" id="IPR000114">
    <property type="entry name" value="Ribosomal_uL16_bact-type"/>
</dbReference>
<dbReference type="InterPro" id="IPR016180">
    <property type="entry name" value="Ribosomal_uL16_dom"/>
</dbReference>
<dbReference type="InterPro" id="IPR036920">
    <property type="entry name" value="Ribosomal_uL16_sf"/>
</dbReference>
<dbReference type="NCBIfam" id="TIGR01164">
    <property type="entry name" value="rplP_bact"/>
    <property type="match status" value="1"/>
</dbReference>
<dbReference type="PANTHER" id="PTHR12220">
    <property type="entry name" value="50S/60S RIBOSOMAL PROTEIN L16"/>
    <property type="match status" value="1"/>
</dbReference>
<dbReference type="PANTHER" id="PTHR12220:SF13">
    <property type="entry name" value="LARGE RIBOSOMAL SUBUNIT PROTEIN UL16M"/>
    <property type="match status" value="1"/>
</dbReference>
<dbReference type="Pfam" id="PF00252">
    <property type="entry name" value="Ribosomal_L16"/>
    <property type="match status" value="1"/>
</dbReference>
<dbReference type="PRINTS" id="PR00060">
    <property type="entry name" value="RIBOSOMALL16"/>
</dbReference>
<dbReference type="SUPFAM" id="SSF54686">
    <property type="entry name" value="Ribosomal protein L16p/L10e"/>
    <property type="match status" value="1"/>
</dbReference>
<evidence type="ECO:0000255" key="1">
    <source>
        <dbReference type="HAMAP-Rule" id="MF_01342"/>
    </source>
</evidence>
<evidence type="ECO:0000256" key="2">
    <source>
        <dbReference type="SAM" id="MobiDB-lite"/>
    </source>
</evidence>
<evidence type="ECO:0000305" key="3"/>
<name>RL16_COXB1</name>
<feature type="chain" id="PRO_1000142953" description="Large ribosomal subunit protein uL16">
    <location>
        <begin position="1"/>
        <end position="137"/>
    </location>
</feature>
<feature type="region of interest" description="Disordered" evidence="2">
    <location>
        <begin position="1"/>
        <end position="20"/>
    </location>
</feature>
<feature type="compositionally biased region" description="Basic residues" evidence="2">
    <location>
        <begin position="7"/>
        <end position="17"/>
    </location>
</feature>
<reference key="1">
    <citation type="journal article" date="2009" name="Infect. Immun.">
        <title>Comparative genomics reveal extensive transposon-mediated genomic plasticity and diversity among potential effector proteins within the genus Coxiella.</title>
        <authorList>
            <person name="Beare P.A."/>
            <person name="Unsworth N."/>
            <person name="Andoh M."/>
            <person name="Voth D.E."/>
            <person name="Omsland A."/>
            <person name="Gilk S.D."/>
            <person name="Williams K.P."/>
            <person name="Sobral B.W."/>
            <person name="Kupko J.J. III"/>
            <person name="Porcella S.F."/>
            <person name="Samuel J.E."/>
            <person name="Heinzen R.A."/>
        </authorList>
    </citation>
    <scope>NUCLEOTIDE SEQUENCE [LARGE SCALE GENOMIC DNA]</scope>
    <source>
        <strain>CbuK_Q154</strain>
    </source>
</reference>